<name>RECX_PSEF5</name>
<organism>
    <name type="scientific">Pseudomonas fluorescens (strain ATCC BAA-477 / NRRL B-23932 / Pf-5)</name>
    <dbReference type="NCBI Taxonomy" id="220664"/>
    <lineage>
        <taxon>Bacteria</taxon>
        <taxon>Pseudomonadati</taxon>
        <taxon>Pseudomonadota</taxon>
        <taxon>Gammaproteobacteria</taxon>
        <taxon>Pseudomonadales</taxon>
        <taxon>Pseudomonadaceae</taxon>
        <taxon>Pseudomonas</taxon>
    </lineage>
</organism>
<keyword id="KW-0963">Cytoplasm</keyword>
<comment type="function">
    <text evidence="1">Modulates RecA activity.</text>
</comment>
<comment type="subcellular location">
    <subcellularLocation>
        <location evidence="1">Cytoplasm</location>
    </subcellularLocation>
</comment>
<comment type="similarity">
    <text evidence="1">Belongs to the RecX family.</text>
</comment>
<protein>
    <recommendedName>
        <fullName evidence="1">Regulatory protein RecX</fullName>
    </recommendedName>
</protein>
<sequence length="155" mass="17982">MTAVLDTLVAVRRTAMDLLARREHGRVELTRKLRQRGAPPEMIEAALDRLTEEGLLSESRYLESFVSYRARSGYGPMRIREELGQRGLQRSDIDLALRECGIDWQEQLRDVWQRKFAGRFPADARERAKQGRFLSYRGYSMDMISRLLSGRGMDD</sequence>
<dbReference type="EMBL" id="CP000076">
    <property type="protein sequence ID" value="AAY90519.1"/>
    <property type="molecule type" value="Genomic_DNA"/>
</dbReference>
<dbReference type="RefSeq" id="WP_011059580.1">
    <property type="nucleotide sequence ID" value="NC_004129.6"/>
</dbReference>
<dbReference type="SMR" id="Q4KHC0"/>
<dbReference type="STRING" id="220664.PFL_1232"/>
<dbReference type="GeneID" id="57474252"/>
<dbReference type="KEGG" id="pfl:PFL_1232"/>
<dbReference type="PATRIC" id="fig|220664.5.peg.1265"/>
<dbReference type="eggNOG" id="COG2137">
    <property type="taxonomic scope" value="Bacteria"/>
</dbReference>
<dbReference type="HOGENOM" id="CLU_066607_3_2_6"/>
<dbReference type="Proteomes" id="UP000008540">
    <property type="component" value="Chromosome"/>
</dbReference>
<dbReference type="GO" id="GO:0005737">
    <property type="term" value="C:cytoplasm"/>
    <property type="evidence" value="ECO:0007669"/>
    <property type="project" value="UniProtKB-SubCell"/>
</dbReference>
<dbReference type="GO" id="GO:0006282">
    <property type="term" value="P:regulation of DNA repair"/>
    <property type="evidence" value="ECO:0007669"/>
    <property type="project" value="UniProtKB-UniRule"/>
</dbReference>
<dbReference type="Gene3D" id="1.10.10.10">
    <property type="entry name" value="Winged helix-like DNA-binding domain superfamily/Winged helix DNA-binding domain"/>
    <property type="match status" value="3"/>
</dbReference>
<dbReference type="HAMAP" id="MF_01114">
    <property type="entry name" value="RecX"/>
    <property type="match status" value="1"/>
</dbReference>
<dbReference type="InterPro" id="IPR053926">
    <property type="entry name" value="RecX_HTH_1st"/>
</dbReference>
<dbReference type="InterPro" id="IPR053924">
    <property type="entry name" value="RecX_HTH_2nd"/>
</dbReference>
<dbReference type="InterPro" id="IPR053925">
    <property type="entry name" value="RecX_HTH_3rd"/>
</dbReference>
<dbReference type="InterPro" id="IPR003783">
    <property type="entry name" value="Regulatory_RecX"/>
</dbReference>
<dbReference type="InterPro" id="IPR036388">
    <property type="entry name" value="WH-like_DNA-bd_sf"/>
</dbReference>
<dbReference type="NCBIfam" id="NF001054">
    <property type="entry name" value="PRK00117.2-1"/>
    <property type="match status" value="1"/>
</dbReference>
<dbReference type="PANTHER" id="PTHR33602">
    <property type="entry name" value="REGULATORY PROTEIN RECX FAMILY PROTEIN"/>
    <property type="match status" value="1"/>
</dbReference>
<dbReference type="PANTHER" id="PTHR33602:SF1">
    <property type="entry name" value="REGULATORY PROTEIN RECX FAMILY PROTEIN"/>
    <property type="match status" value="1"/>
</dbReference>
<dbReference type="Pfam" id="PF21982">
    <property type="entry name" value="RecX_HTH1"/>
    <property type="match status" value="1"/>
</dbReference>
<dbReference type="Pfam" id="PF02631">
    <property type="entry name" value="RecX_HTH2"/>
    <property type="match status" value="1"/>
</dbReference>
<dbReference type="Pfam" id="PF21981">
    <property type="entry name" value="RecX_HTH3"/>
    <property type="match status" value="1"/>
</dbReference>
<feature type="chain" id="PRO_1000065197" description="Regulatory protein RecX">
    <location>
        <begin position="1"/>
        <end position="155"/>
    </location>
</feature>
<reference key="1">
    <citation type="journal article" date="2005" name="Nat. Biotechnol.">
        <title>Complete genome sequence of the plant commensal Pseudomonas fluorescens Pf-5.</title>
        <authorList>
            <person name="Paulsen I.T."/>
            <person name="Press C.M."/>
            <person name="Ravel J."/>
            <person name="Kobayashi D.Y."/>
            <person name="Myers G.S.A."/>
            <person name="Mavrodi D.V."/>
            <person name="DeBoy R.T."/>
            <person name="Seshadri R."/>
            <person name="Ren Q."/>
            <person name="Madupu R."/>
            <person name="Dodson R.J."/>
            <person name="Durkin A.S."/>
            <person name="Brinkac L.M."/>
            <person name="Daugherty S.C."/>
            <person name="Sullivan S.A."/>
            <person name="Rosovitz M.J."/>
            <person name="Gwinn M.L."/>
            <person name="Zhou L."/>
            <person name="Schneider D.J."/>
            <person name="Cartinhour S.W."/>
            <person name="Nelson W.C."/>
            <person name="Weidman J."/>
            <person name="Watkins K."/>
            <person name="Tran K."/>
            <person name="Khouri H."/>
            <person name="Pierson E.A."/>
            <person name="Pierson L.S. III"/>
            <person name="Thomashow L.S."/>
            <person name="Loper J.E."/>
        </authorList>
    </citation>
    <scope>NUCLEOTIDE SEQUENCE [LARGE SCALE GENOMIC DNA]</scope>
    <source>
        <strain>ATCC BAA-477 / NRRL B-23932 / Pf-5</strain>
    </source>
</reference>
<accession>Q4KHC0</accession>
<gene>
    <name evidence="1" type="primary">recX</name>
    <name type="ordered locus">PFL_1232</name>
</gene>
<evidence type="ECO:0000255" key="1">
    <source>
        <dbReference type="HAMAP-Rule" id="MF_01114"/>
    </source>
</evidence>
<proteinExistence type="inferred from homology"/>